<dbReference type="EMBL" id="HG315671">
    <property type="protein sequence ID" value="CDF79939.1"/>
    <property type="molecule type" value="Genomic_DNA"/>
</dbReference>
<dbReference type="RefSeq" id="WP_038530552.1">
    <property type="nucleotide sequence ID" value="NZ_HG315671.1"/>
</dbReference>
<dbReference type="SMR" id="T2KPM5"/>
<dbReference type="STRING" id="1347342.BN863_22270"/>
<dbReference type="PATRIC" id="fig|1347342.6.peg.2234"/>
<dbReference type="eggNOG" id="COG0702">
    <property type="taxonomic scope" value="Bacteria"/>
</dbReference>
<dbReference type="HOGENOM" id="CLU_015553_1_4_10"/>
<dbReference type="OrthoDB" id="5694214at2"/>
<dbReference type="Proteomes" id="UP000016160">
    <property type="component" value="Chromosome"/>
</dbReference>
<dbReference type="GO" id="GO:0009279">
    <property type="term" value="C:cell outer membrane"/>
    <property type="evidence" value="ECO:0007669"/>
    <property type="project" value="UniProtKB-SubCell"/>
</dbReference>
<dbReference type="CDD" id="cd08977">
    <property type="entry name" value="SusD"/>
    <property type="match status" value="1"/>
</dbReference>
<dbReference type="Gene3D" id="1.25.40.390">
    <property type="match status" value="1"/>
</dbReference>
<dbReference type="InterPro" id="IPR033985">
    <property type="entry name" value="SusD-like_N"/>
</dbReference>
<dbReference type="InterPro" id="IPR012944">
    <property type="entry name" value="SusD_RagB_dom"/>
</dbReference>
<dbReference type="InterPro" id="IPR011990">
    <property type="entry name" value="TPR-like_helical_dom_sf"/>
</dbReference>
<dbReference type="Pfam" id="PF14322">
    <property type="entry name" value="SusD-like_3"/>
    <property type="match status" value="1"/>
</dbReference>
<dbReference type="Pfam" id="PF07980">
    <property type="entry name" value="SusD_RagB"/>
    <property type="match status" value="1"/>
</dbReference>
<dbReference type="SUPFAM" id="SSF48452">
    <property type="entry name" value="TPR-like"/>
    <property type="match status" value="1"/>
</dbReference>
<gene>
    <name type="ORF">BN863_22270</name>
</gene>
<name>PLH38_FORAG</name>
<keyword id="KW-0998">Cell outer membrane</keyword>
<keyword id="KW-0175">Coiled coil</keyword>
<keyword id="KW-0472">Membrane</keyword>
<keyword id="KW-1185">Reference proteome</keyword>
<keyword id="KW-0732">Signal</keyword>
<accession>T2KPM5</accession>
<organism>
    <name type="scientific">Formosa agariphila (strain DSM 15362 / KCTC 12365 / LMG 23005 / KMM 3901 / M-2Alg 35-1)</name>
    <dbReference type="NCBI Taxonomy" id="1347342"/>
    <lineage>
        <taxon>Bacteria</taxon>
        <taxon>Pseudomonadati</taxon>
        <taxon>Bacteroidota</taxon>
        <taxon>Flavobacteriia</taxon>
        <taxon>Flavobacteriales</taxon>
        <taxon>Flavobacteriaceae</taxon>
        <taxon>Formosa</taxon>
    </lineage>
</organism>
<proteinExistence type="evidence at transcript level"/>
<sequence>MKKFKNISITFLILISLGVLNSCESVLEVEPESSISDEQFWKTNEDAKLGLAAAYDALQKAYRTKRFYWGEFRADNYVNSEKPQPDTQDLINNNLTPESSTEYLQWDEFYSLIFRANLAIEKIPEIPYYDTQYLGEAYALRAFAYFDAYRVWGGVPLFTKAELTFSDDAIKPRSSAQEVLDLVLSDIEEAEKNLTVVSSDYTFSKLSLLAFKAQVHMYLNEYEAANTALTSLIASNQFSLTTNRKQWRDLFLNDEINYPGEGQEGPELIMSIRYDFEEDGNRASGIYQVFFPGVPSYYVAPNLVEEWETKFPTDSTAWATKYPNVPPHVFEENEDTGELNAKYGDYRYYESIAAPGTQEEDLRISKYHKVNISPSIDDTNIILFRYADMLLLKAEALNQLGQPTEAIELVNQIREARELPLVNSGTIPDVVNINDKDELEDFILSERRLELLAEGYRWWDLVRTNKAVEVMGPINGLTQDRIIWPLWFRHLIDNPKLEQNVPY</sequence>
<reference key="1">
    <citation type="journal article" date="2013" name="Appl. Environ. Microbiol.">
        <title>The genome of the alga-associated marine flavobacterium Formosa agariphila KMM 3901T reveals a broad potential for degradation of algal polysaccharides.</title>
        <authorList>
            <person name="Mann A.J."/>
            <person name="Hahnke R.L."/>
            <person name="Huang S."/>
            <person name="Werner J."/>
            <person name="Xing P."/>
            <person name="Barbeyron T."/>
            <person name="Huettel B."/>
            <person name="Stueber K."/>
            <person name="Reinhardt R."/>
            <person name="Harder J."/>
            <person name="Gloeckner F.O."/>
            <person name="Amann R.I."/>
            <person name="Teeling H."/>
        </authorList>
    </citation>
    <scope>NUCLEOTIDE SEQUENCE [LARGE SCALE GENOMIC DNA]</scope>
    <source>
        <strain>DSM 15362 / KCTC 12365 / LMG 23005 / KMM 3901 / M-2Alg 35-1</strain>
    </source>
</reference>
<reference key="2">
    <citation type="journal article" date="2019" name="Nat. Chem. Biol.">
        <title>A marine bacterial enzymatic cascade degrades the algal polysaccharide ulvan.</title>
        <authorList>
            <person name="Reisky L."/>
            <person name="Prechoux A."/>
            <person name="Zuehlke M.K."/>
            <person name="Baeumgen M."/>
            <person name="Robb C.S."/>
            <person name="Gerlach N."/>
            <person name="Roret T."/>
            <person name="Stanetty C."/>
            <person name="Larocque R."/>
            <person name="Michel G."/>
            <person name="Song T."/>
            <person name="Markert S."/>
            <person name="Unfried F."/>
            <person name="Mihovilovic M.D."/>
            <person name="Trautwein-Schult A."/>
            <person name="Becher D."/>
            <person name="Schweder T."/>
            <person name="Bornscheuer U.T."/>
            <person name="Hehemann J.H."/>
        </authorList>
    </citation>
    <scope>FUNCTION</scope>
    <scope>SUBCELLULAR LOCATION</scope>
    <scope>INDUCTION</scope>
</reference>
<feature type="signal peptide" evidence="2">
    <location>
        <begin position="1"/>
        <end position="21"/>
    </location>
</feature>
<feature type="chain" id="PRO_5004602767" description="SusD-like protein P38">
    <location>
        <begin position="22"/>
        <end position="503"/>
    </location>
</feature>
<comment type="function">
    <text evidence="1 6">Polysaccharide-binding protein probably involved in ulvan degradation (Probable). Ulvan is the main polysaccharide component of the Ulvales (green seaweed) cell wall. It is composed of disaccharide building blocks comprising 3-sulfated rhamnose (Rha3S) linked to D-glucuronic acid (GlcA), L-iduronic acid (IduA), or D-xylose (Xyl) (Probable). The SusD-like protein may mediate ulvan oligomer-binding before transport in the periplasm for further degradation (By similarity).</text>
</comment>
<comment type="subcellular location">
    <subcellularLocation>
        <location evidence="3">Cell outer membrane</location>
    </subcellularLocation>
</comment>
<comment type="induction">
    <text evidence="3">By ulvan and rhamnose.</text>
</comment>
<comment type="similarity">
    <text evidence="5">Belongs to the SusD family.</text>
</comment>
<protein>
    <recommendedName>
        <fullName evidence="4">SusD-like protein P38</fullName>
        <shortName evidence="4">P38_SusD</shortName>
    </recommendedName>
    <alternativeName>
        <fullName evidence="4">Polysaccharide utilization locus H protein P38</fullName>
        <shortName>PUL H protein P38</shortName>
    </alternativeName>
</protein>
<evidence type="ECO:0000250" key="1">
    <source>
        <dbReference type="UniProtKB" id="Q8A1G2"/>
    </source>
</evidence>
<evidence type="ECO:0000255" key="2"/>
<evidence type="ECO:0000269" key="3">
    <source>
    </source>
</evidence>
<evidence type="ECO:0000303" key="4">
    <source>
    </source>
</evidence>
<evidence type="ECO:0000305" key="5"/>
<evidence type="ECO:0000305" key="6">
    <source>
    </source>
</evidence>